<proteinExistence type="evidence at protein level"/>
<sequence length="340" mass="37960">MTVSKIPIWLDCDPGHDDAIAILLGCFHPAFNLLGISTCFGNAPPENTDYNARSLLTAMGKAQAIPVYKGAQRPWKREPHYAPDIHGISGLDGTSLLPKPTFEARTDKTYIEAIEEAILANNGEISFVSTGALTTLATVFRCKPYLKKSVKYISIMGGGLHGLGNCNPNLSAEFNVWIDPDAANYIFRDPDVKDKCIVVPLNLTHKAIATYKVNEMIYNEKNNSKLRELFLELFQFFAHTYKDMQGFESGPPIHDPVALMPLLEFYGWDPSSAVGFRYKRMDISCIDDVFNENSGKIIIEKEYPNDSDVGTIIGLDLNIQYFWDQIFEALNRADKMSTIG</sequence>
<comment type="function">
    <text>Also acts on cytidine.</text>
</comment>
<comment type="catalytic activity">
    <reaction>
        <text>uridine + H2O = D-ribose + uracil</text>
        <dbReference type="Rhea" id="RHEA:15577"/>
        <dbReference type="ChEBI" id="CHEBI:15377"/>
        <dbReference type="ChEBI" id="CHEBI:16704"/>
        <dbReference type="ChEBI" id="CHEBI:17568"/>
        <dbReference type="ChEBI" id="CHEBI:47013"/>
        <dbReference type="EC" id="3.2.2.3"/>
    </reaction>
</comment>
<comment type="biophysicochemical properties">
    <kinetics>
        <KM evidence="4">0.86 mM for uridine</KM>
        <KM evidence="4">1.66 mM for 5-methyluridine</KM>
    </kinetics>
    <phDependence>
        <text evidence="4">Optimum pH is 7.0-7.2.</text>
    </phDependence>
</comment>
<comment type="subcellular location">
    <subcellularLocation>
        <location evidence="3">Cytoplasm</location>
    </subcellularLocation>
    <subcellularLocation>
        <location evidence="3">Nucleus</location>
    </subcellularLocation>
</comment>
<comment type="similarity">
    <text evidence="5">Belongs to the IUNH family.</text>
</comment>
<comment type="sequence caution" evidence="5">
    <conflict type="erroneous initiation">
        <sequence resource="EMBL-CDS" id="AAB64841"/>
    </conflict>
</comment>
<comment type="sequence caution" evidence="5">
    <conflict type="erroneous initiation">
        <sequence resource="EMBL-CDS" id="AAG44107"/>
    </conflict>
</comment>
<name>URH1_YEAST</name>
<keyword id="KW-0002">3D-structure</keyword>
<keyword id="KW-0963">Cytoplasm</keyword>
<keyword id="KW-0326">Glycosidase</keyword>
<keyword id="KW-0378">Hydrolase</keyword>
<keyword id="KW-0539">Nucleus</keyword>
<keyword id="KW-1185">Reference proteome</keyword>
<organism>
    <name type="scientific">Saccharomyces cerevisiae (strain ATCC 204508 / S288c)</name>
    <name type="common">Baker's yeast</name>
    <dbReference type="NCBI Taxonomy" id="559292"/>
    <lineage>
        <taxon>Eukaryota</taxon>
        <taxon>Fungi</taxon>
        <taxon>Dikarya</taxon>
        <taxon>Ascomycota</taxon>
        <taxon>Saccharomycotina</taxon>
        <taxon>Saccharomycetes</taxon>
        <taxon>Saccharomycetales</taxon>
        <taxon>Saccharomycetaceae</taxon>
        <taxon>Saccharomyces</taxon>
    </lineage>
</organism>
<dbReference type="EC" id="3.2.2.3"/>
<dbReference type="EMBL" id="AF217406">
    <property type="protein sequence ID" value="AAG44107.1"/>
    <property type="status" value="ALT_INIT"/>
    <property type="molecule type" value="Genomic_DNA"/>
</dbReference>
<dbReference type="EMBL" id="U32274">
    <property type="protein sequence ID" value="AAB64841.1"/>
    <property type="status" value="ALT_INIT"/>
    <property type="molecule type" value="Genomic_DNA"/>
</dbReference>
<dbReference type="EMBL" id="BK006938">
    <property type="protein sequence ID" value="DAA12243.1"/>
    <property type="molecule type" value="Genomic_DNA"/>
</dbReference>
<dbReference type="PIR" id="S69683">
    <property type="entry name" value="S69683"/>
</dbReference>
<dbReference type="RefSeq" id="NP_010688.4">
    <property type="nucleotide sequence ID" value="NM_001180708.3"/>
</dbReference>
<dbReference type="PDB" id="8RIH">
    <property type="method" value="X-ray"/>
    <property type="resolution" value="2.74 A"/>
    <property type="chains" value="A/B=1-340"/>
</dbReference>
<dbReference type="PDBsum" id="8RIH"/>
<dbReference type="SMR" id="Q04179"/>
<dbReference type="BioGRID" id="32461">
    <property type="interactions" value="67"/>
</dbReference>
<dbReference type="DIP" id="DIP-1845N"/>
<dbReference type="FunCoup" id="Q04179">
    <property type="interactions" value="264"/>
</dbReference>
<dbReference type="IntAct" id="Q04179">
    <property type="interactions" value="2"/>
</dbReference>
<dbReference type="MINT" id="Q04179"/>
<dbReference type="STRING" id="4932.YDR400W"/>
<dbReference type="iPTMnet" id="Q04179"/>
<dbReference type="PaxDb" id="4932-YDR400W"/>
<dbReference type="PeptideAtlas" id="Q04179"/>
<dbReference type="EnsemblFungi" id="YDR400W_mRNA">
    <property type="protein sequence ID" value="YDR400W"/>
    <property type="gene ID" value="YDR400W"/>
</dbReference>
<dbReference type="GeneID" id="852009"/>
<dbReference type="KEGG" id="sce:YDR400W"/>
<dbReference type="AGR" id="SGD:S000002808"/>
<dbReference type="SGD" id="S000002808">
    <property type="gene designation" value="URH1"/>
</dbReference>
<dbReference type="VEuPathDB" id="FungiDB:YDR400W"/>
<dbReference type="eggNOG" id="KOG2938">
    <property type="taxonomic scope" value="Eukaryota"/>
</dbReference>
<dbReference type="HOGENOM" id="CLU_036838_2_0_1"/>
<dbReference type="InParanoid" id="Q04179"/>
<dbReference type="OMA" id="WVGVETK"/>
<dbReference type="OrthoDB" id="432381at2759"/>
<dbReference type="BioCyc" id="MetaCyc:YDR400W-MONOMER"/>
<dbReference type="BioCyc" id="YEAST:YDR400W-MONOMER"/>
<dbReference type="BRENDA" id="3.2.2.3">
    <property type="organism ID" value="984"/>
</dbReference>
<dbReference type="SABIO-RK" id="Q04179"/>
<dbReference type="BioGRID-ORCS" id="852009">
    <property type="hits" value="0 hits in 10 CRISPR screens"/>
</dbReference>
<dbReference type="PRO" id="PR:Q04179"/>
<dbReference type="Proteomes" id="UP000002311">
    <property type="component" value="Chromosome IV"/>
</dbReference>
<dbReference type="RNAct" id="Q04179">
    <property type="molecule type" value="protein"/>
</dbReference>
<dbReference type="GO" id="GO:0005737">
    <property type="term" value="C:cytoplasm"/>
    <property type="evidence" value="ECO:0007005"/>
    <property type="project" value="SGD"/>
</dbReference>
<dbReference type="GO" id="GO:0005829">
    <property type="term" value="C:cytosol"/>
    <property type="evidence" value="ECO:0000318"/>
    <property type="project" value="GO_Central"/>
</dbReference>
<dbReference type="GO" id="GO:0005634">
    <property type="term" value="C:nucleus"/>
    <property type="evidence" value="ECO:0007005"/>
    <property type="project" value="SGD"/>
</dbReference>
<dbReference type="GO" id="GO:0070635">
    <property type="term" value="F:nicotinamide riboside hydrolase activity"/>
    <property type="evidence" value="ECO:0000314"/>
    <property type="project" value="SGD"/>
</dbReference>
<dbReference type="GO" id="GO:0070636">
    <property type="term" value="F:nicotinic acid riboside hydrolase activity"/>
    <property type="evidence" value="ECO:0000314"/>
    <property type="project" value="SGD"/>
</dbReference>
<dbReference type="GO" id="GO:0008477">
    <property type="term" value="F:purine nucleosidase activity"/>
    <property type="evidence" value="ECO:0000318"/>
    <property type="project" value="GO_Central"/>
</dbReference>
<dbReference type="GO" id="GO:0050263">
    <property type="term" value="F:ribosylpyrimidine nucleosidase activity"/>
    <property type="evidence" value="ECO:0000314"/>
    <property type="project" value="SGD"/>
</dbReference>
<dbReference type="GO" id="GO:0045437">
    <property type="term" value="F:uridine nucleosidase activity"/>
    <property type="evidence" value="ECO:0000314"/>
    <property type="project" value="SGD"/>
</dbReference>
<dbReference type="GO" id="GO:0006216">
    <property type="term" value="P:cytidine catabolic process"/>
    <property type="evidence" value="ECO:0000315"/>
    <property type="project" value="SGD"/>
</dbReference>
<dbReference type="GO" id="GO:0019358">
    <property type="term" value="P:nicotinate nucleotide salvage"/>
    <property type="evidence" value="ECO:0000316"/>
    <property type="project" value="SGD"/>
</dbReference>
<dbReference type="GO" id="GO:0006152">
    <property type="term" value="P:purine nucleoside catabolic process"/>
    <property type="evidence" value="ECO:0000318"/>
    <property type="project" value="GO_Central"/>
</dbReference>
<dbReference type="GO" id="GO:0046135">
    <property type="term" value="P:pyrimidine nucleoside catabolic process"/>
    <property type="evidence" value="ECO:0000314"/>
    <property type="project" value="SGD"/>
</dbReference>
<dbReference type="GO" id="GO:0008655">
    <property type="term" value="P:pyrimidine-containing compound salvage"/>
    <property type="evidence" value="ECO:0000315"/>
    <property type="project" value="SGD"/>
</dbReference>
<dbReference type="GO" id="GO:0006218">
    <property type="term" value="P:uridine catabolic process"/>
    <property type="evidence" value="ECO:0000315"/>
    <property type="project" value="SGD"/>
</dbReference>
<dbReference type="CDD" id="cd02651">
    <property type="entry name" value="nuc_hydro_IU_UC_XIUA"/>
    <property type="match status" value="1"/>
</dbReference>
<dbReference type="FunFam" id="3.90.245.10:FF:000008">
    <property type="entry name" value="Uridine nucleosidase"/>
    <property type="match status" value="1"/>
</dbReference>
<dbReference type="Gene3D" id="3.90.245.10">
    <property type="entry name" value="Ribonucleoside hydrolase-like"/>
    <property type="match status" value="1"/>
</dbReference>
<dbReference type="InterPro" id="IPR015910">
    <property type="entry name" value="I/U_nuclsd_hydro_CS"/>
</dbReference>
<dbReference type="InterPro" id="IPR001910">
    <property type="entry name" value="Inosine/uridine_hydrolase_dom"/>
</dbReference>
<dbReference type="InterPro" id="IPR023186">
    <property type="entry name" value="IUNH"/>
</dbReference>
<dbReference type="InterPro" id="IPR036452">
    <property type="entry name" value="Ribo_hydro-like"/>
</dbReference>
<dbReference type="PANTHER" id="PTHR12304">
    <property type="entry name" value="INOSINE-URIDINE PREFERRING NUCLEOSIDE HYDROLASE"/>
    <property type="match status" value="1"/>
</dbReference>
<dbReference type="PANTHER" id="PTHR12304:SF4">
    <property type="entry name" value="URIDINE NUCLEOSIDASE"/>
    <property type="match status" value="1"/>
</dbReference>
<dbReference type="Pfam" id="PF01156">
    <property type="entry name" value="IU_nuc_hydro"/>
    <property type="match status" value="1"/>
</dbReference>
<dbReference type="SUPFAM" id="SSF53590">
    <property type="entry name" value="Nucleoside hydrolase"/>
    <property type="match status" value="1"/>
</dbReference>
<dbReference type="PROSITE" id="PS01247">
    <property type="entry name" value="IUNH"/>
    <property type="match status" value="1"/>
</dbReference>
<reference key="1">
    <citation type="journal article" date="2002" name="Curr. Genet.">
        <title>The URH1 uridine ribohydrolase of Saccharomyces cerevisiae.</title>
        <authorList>
            <person name="Kurtz J.-E."/>
            <person name="Exinger F."/>
            <person name="Erbs P."/>
            <person name="Jund R."/>
        </authorList>
    </citation>
    <scope>NUCLEOTIDE SEQUENCE [GENOMIC DNA]</scope>
    <scope>CHARACTERIZATION</scope>
    <scope>IDENTIFICATION OF PROBABLE INITIATION SITE</scope>
    <scope>MUTAGENESIS OF HIS-254</scope>
</reference>
<reference key="2">
    <citation type="journal article" date="1997" name="Nature">
        <title>The nucleotide sequence of Saccharomyces cerevisiae chromosome IV.</title>
        <authorList>
            <person name="Jacq C."/>
            <person name="Alt-Moerbe J."/>
            <person name="Andre B."/>
            <person name="Arnold W."/>
            <person name="Bahr A."/>
            <person name="Ballesta J.P.G."/>
            <person name="Bargues M."/>
            <person name="Baron L."/>
            <person name="Becker A."/>
            <person name="Biteau N."/>
            <person name="Bloecker H."/>
            <person name="Blugeon C."/>
            <person name="Boskovic J."/>
            <person name="Brandt P."/>
            <person name="Brueckner M."/>
            <person name="Buitrago M.J."/>
            <person name="Coster F."/>
            <person name="Delaveau T."/>
            <person name="del Rey F."/>
            <person name="Dujon B."/>
            <person name="Eide L.G."/>
            <person name="Garcia-Cantalejo J.M."/>
            <person name="Goffeau A."/>
            <person name="Gomez-Peris A."/>
            <person name="Granotier C."/>
            <person name="Hanemann V."/>
            <person name="Hankeln T."/>
            <person name="Hoheisel J.D."/>
            <person name="Jaeger W."/>
            <person name="Jimenez A."/>
            <person name="Jonniaux J.-L."/>
            <person name="Kraemer C."/>
            <person name="Kuester H."/>
            <person name="Laamanen P."/>
            <person name="Legros Y."/>
            <person name="Louis E.J."/>
            <person name="Moeller-Rieker S."/>
            <person name="Monnet A."/>
            <person name="Moro M."/>
            <person name="Mueller-Auer S."/>
            <person name="Nussbaumer B."/>
            <person name="Paricio N."/>
            <person name="Paulin L."/>
            <person name="Perea J."/>
            <person name="Perez-Alonso M."/>
            <person name="Perez-Ortin J.E."/>
            <person name="Pohl T.M."/>
            <person name="Prydz H."/>
            <person name="Purnelle B."/>
            <person name="Rasmussen S.W."/>
            <person name="Remacha M.A."/>
            <person name="Revuelta J.L."/>
            <person name="Rieger M."/>
            <person name="Salom D."/>
            <person name="Saluz H.P."/>
            <person name="Saiz J.E."/>
            <person name="Saren A.-M."/>
            <person name="Schaefer M."/>
            <person name="Scharfe M."/>
            <person name="Schmidt E.R."/>
            <person name="Schneider C."/>
            <person name="Scholler P."/>
            <person name="Schwarz S."/>
            <person name="Soler-Mira A."/>
            <person name="Urrestarazu L.A."/>
            <person name="Verhasselt P."/>
            <person name="Vissers S."/>
            <person name="Voet M."/>
            <person name="Volckaert G."/>
            <person name="Wagner G."/>
            <person name="Wambutt R."/>
            <person name="Wedler E."/>
            <person name="Wedler H."/>
            <person name="Woelfl S."/>
            <person name="Harris D.E."/>
            <person name="Bowman S."/>
            <person name="Brown D."/>
            <person name="Churcher C.M."/>
            <person name="Connor R."/>
            <person name="Dedman K."/>
            <person name="Gentles S."/>
            <person name="Hamlin N."/>
            <person name="Hunt S."/>
            <person name="Jones L."/>
            <person name="McDonald S."/>
            <person name="Murphy L.D."/>
            <person name="Niblett D."/>
            <person name="Odell C."/>
            <person name="Oliver K."/>
            <person name="Rajandream M.A."/>
            <person name="Richards C."/>
            <person name="Shore L."/>
            <person name="Walsh S.V."/>
            <person name="Barrell B.G."/>
            <person name="Dietrich F.S."/>
            <person name="Mulligan J.T."/>
            <person name="Allen E."/>
            <person name="Araujo R."/>
            <person name="Aviles E."/>
            <person name="Berno A."/>
            <person name="Carpenter J."/>
            <person name="Chen E."/>
            <person name="Cherry J.M."/>
            <person name="Chung E."/>
            <person name="Duncan M."/>
            <person name="Hunicke-Smith S."/>
            <person name="Hyman R.W."/>
            <person name="Komp C."/>
            <person name="Lashkari D."/>
            <person name="Lew H."/>
            <person name="Lin D."/>
            <person name="Mosedale D."/>
            <person name="Nakahara K."/>
            <person name="Namath A."/>
            <person name="Oefner P."/>
            <person name="Oh C."/>
            <person name="Petel F.X."/>
            <person name="Roberts D."/>
            <person name="Schramm S."/>
            <person name="Schroeder M."/>
            <person name="Shogren T."/>
            <person name="Shroff N."/>
            <person name="Winant A."/>
            <person name="Yelton M.A."/>
            <person name="Botstein D."/>
            <person name="Davis R.W."/>
            <person name="Johnston M."/>
            <person name="Andrews S."/>
            <person name="Brinkman R."/>
            <person name="Cooper J."/>
            <person name="Ding H."/>
            <person name="Du Z."/>
            <person name="Favello A."/>
            <person name="Fulton L."/>
            <person name="Gattung S."/>
            <person name="Greco T."/>
            <person name="Hallsworth K."/>
            <person name="Hawkins J."/>
            <person name="Hillier L.W."/>
            <person name="Jier M."/>
            <person name="Johnson D."/>
            <person name="Johnston L."/>
            <person name="Kirsten J."/>
            <person name="Kucaba T."/>
            <person name="Langston Y."/>
            <person name="Latreille P."/>
            <person name="Le T."/>
            <person name="Mardis E."/>
            <person name="Menezes S."/>
            <person name="Miller N."/>
            <person name="Nhan M."/>
            <person name="Pauley A."/>
            <person name="Peluso D."/>
            <person name="Rifkin L."/>
            <person name="Riles L."/>
            <person name="Taich A."/>
            <person name="Trevaskis E."/>
            <person name="Vignati D."/>
            <person name="Wilcox L."/>
            <person name="Wohldman P."/>
            <person name="Vaudin M."/>
            <person name="Wilson R."/>
            <person name="Waterston R."/>
            <person name="Albermann K."/>
            <person name="Hani J."/>
            <person name="Heumann K."/>
            <person name="Kleine K."/>
            <person name="Mewes H.-W."/>
            <person name="Zollner A."/>
            <person name="Zaccaria P."/>
        </authorList>
    </citation>
    <scope>NUCLEOTIDE SEQUENCE [LARGE SCALE GENOMIC DNA]</scope>
    <source>
        <strain>ATCC 204508 / S288c</strain>
    </source>
</reference>
<reference key="3">
    <citation type="journal article" date="2014" name="G3 (Bethesda)">
        <title>The reference genome sequence of Saccharomyces cerevisiae: Then and now.</title>
        <authorList>
            <person name="Engel S.R."/>
            <person name="Dietrich F.S."/>
            <person name="Fisk D.G."/>
            <person name="Binkley G."/>
            <person name="Balakrishnan R."/>
            <person name="Costanzo M.C."/>
            <person name="Dwight S.S."/>
            <person name="Hitz B.C."/>
            <person name="Karra K."/>
            <person name="Nash R.S."/>
            <person name="Weng S."/>
            <person name="Wong E.D."/>
            <person name="Lloyd P."/>
            <person name="Skrzypek M.S."/>
            <person name="Miyasato S.R."/>
            <person name="Simison M."/>
            <person name="Cherry J.M."/>
        </authorList>
    </citation>
    <scope>GENOME REANNOTATION</scope>
    <source>
        <strain>ATCC 204508 / S288c</strain>
    </source>
</reference>
<reference key="4">
    <citation type="journal article" date="1975" name="J. Biol. Chem.">
        <title>Bakers' yeast uridine nucleosidase. Purification, composition, and physical and enzymatic properties.</title>
        <authorList>
            <person name="Magni G."/>
            <person name="Fioretti E."/>
            <person name="Ipata P.L."/>
            <person name="Natalini P."/>
        </authorList>
    </citation>
    <scope>BIOPHYSICOCHEMICAL PROPERTIES</scope>
</reference>
<reference key="5">
    <citation type="journal article" date="2003" name="Nature">
        <title>Sequencing and comparison of yeast species to identify genes and regulatory elements.</title>
        <authorList>
            <person name="Kellis M."/>
            <person name="Patterson N."/>
            <person name="Endrizzi M."/>
            <person name="Birren B.W."/>
            <person name="Lander E.S."/>
        </authorList>
    </citation>
    <scope>IDENTIFICATION OF PROBABLE INITIATION SITE</scope>
</reference>
<reference key="6">
    <citation type="journal article" date="2003" name="Nature">
        <title>Global analysis of protein localization in budding yeast.</title>
        <authorList>
            <person name="Huh W.-K."/>
            <person name="Falvo J.V."/>
            <person name="Gerke L.C."/>
            <person name="Carroll A.S."/>
            <person name="Howson R.W."/>
            <person name="Weissman J.S."/>
            <person name="O'Shea E.K."/>
        </authorList>
    </citation>
    <scope>SUBCELLULAR LOCATION [LARGE SCALE ANALYSIS]</scope>
</reference>
<feature type="chain" id="PRO_0000206812" description="Uridine nucleosidase">
    <location>
        <begin position="1"/>
        <end position="340"/>
    </location>
</feature>
<feature type="active site" evidence="1">
    <location>
        <position position="254"/>
    </location>
</feature>
<feature type="mutagenesis site" description="Reduces the Vmax 30-fold, but does not change the KM in a uridine hydrolase assay." evidence="2">
    <original>H</original>
    <variation>A</variation>
    <location>
        <position position="254"/>
    </location>
</feature>
<feature type="strand" evidence="6">
    <location>
        <begin position="6"/>
        <end position="12"/>
    </location>
</feature>
<feature type="helix" evidence="6">
    <location>
        <begin position="16"/>
        <end position="27"/>
    </location>
</feature>
<feature type="strand" evidence="6">
    <location>
        <begin position="31"/>
        <end position="38"/>
    </location>
</feature>
<feature type="strand" evidence="6">
    <location>
        <begin position="40"/>
        <end position="43"/>
    </location>
</feature>
<feature type="helix" evidence="6">
    <location>
        <begin position="45"/>
        <end position="59"/>
    </location>
</feature>
<feature type="turn" evidence="6">
    <location>
        <begin position="62"/>
        <end position="64"/>
    </location>
</feature>
<feature type="strand" evidence="6">
    <location>
        <begin position="67"/>
        <end position="69"/>
    </location>
</feature>
<feature type="strand" evidence="6">
    <location>
        <begin position="75"/>
        <end position="77"/>
    </location>
</feature>
<feature type="helix" evidence="6">
    <location>
        <begin position="83"/>
        <end position="86"/>
    </location>
</feature>
<feature type="strand" evidence="6">
    <location>
        <begin position="88"/>
        <end position="91"/>
    </location>
</feature>
<feature type="helix" evidence="6">
    <location>
        <begin position="110"/>
        <end position="120"/>
    </location>
</feature>
<feature type="turn" evidence="6">
    <location>
        <begin position="121"/>
        <end position="124"/>
    </location>
</feature>
<feature type="strand" evidence="6">
    <location>
        <begin position="126"/>
        <end position="131"/>
    </location>
</feature>
<feature type="helix" evidence="6">
    <location>
        <begin position="134"/>
        <end position="142"/>
    </location>
</feature>
<feature type="helix" evidence="6">
    <location>
        <begin position="144"/>
        <end position="149"/>
    </location>
</feature>
<feature type="strand" evidence="6">
    <location>
        <begin position="151"/>
        <end position="156"/>
    </location>
</feature>
<feature type="helix" evidence="6">
    <location>
        <begin position="160"/>
        <end position="162"/>
    </location>
</feature>
<feature type="turn" evidence="6">
    <location>
        <begin position="167"/>
        <end position="170"/>
    </location>
</feature>
<feature type="helix" evidence="6">
    <location>
        <begin position="174"/>
        <end position="177"/>
    </location>
</feature>
<feature type="helix" evidence="6">
    <location>
        <begin position="180"/>
        <end position="188"/>
    </location>
</feature>
<feature type="turn" evidence="6">
    <location>
        <begin position="190"/>
        <end position="192"/>
    </location>
</feature>
<feature type="helix" evidence="6">
    <location>
        <begin position="193"/>
        <end position="195"/>
    </location>
</feature>
<feature type="strand" evidence="6">
    <location>
        <begin position="196"/>
        <end position="199"/>
    </location>
</feature>
<feature type="helix" evidence="6">
    <location>
        <begin position="201"/>
        <end position="204"/>
    </location>
</feature>
<feature type="helix" evidence="6">
    <location>
        <begin position="211"/>
        <end position="217"/>
    </location>
</feature>
<feature type="helix" evidence="6">
    <location>
        <begin position="225"/>
        <end position="239"/>
    </location>
</feature>
<feature type="helix" evidence="6">
    <location>
        <begin position="255"/>
        <end position="259"/>
    </location>
</feature>
<feature type="helix" evidence="6">
    <location>
        <begin position="260"/>
        <end position="265"/>
    </location>
</feature>
<feature type="helix" evidence="6">
    <location>
        <begin position="271"/>
        <end position="274"/>
    </location>
</feature>
<feature type="strand" evidence="6">
    <location>
        <begin position="277"/>
        <end position="285"/>
    </location>
</feature>
<feature type="turn" evidence="6">
    <location>
        <begin position="292"/>
        <end position="295"/>
    </location>
</feature>
<feature type="strand" evidence="6">
    <location>
        <begin position="297"/>
        <end position="303"/>
    </location>
</feature>
<feature type="strand" evidence="6">
    <location>
        <begin position="308"/>
        <end position="316"/>
    </location>
</feature>
<feature type="helix" evidence="6">
    <location>
        <begin position="319"/>
        <end position="333"/>
    </location>
</feature>
<feature type="helix" evidence="6">
    <location>
        <begin position="334"/>
        <end position="336"/>
    </location>
</feature>
<protein>
    <recommendedName>
        <fullName>Uridine nucleosidase</fullName>
        <ecNumber>3.2.2.3</ecNumber>
    </recommendedName>
    <alternativeName>
        <fullName>Uridine ribohydrolase</fullName>
    </alternativeName>
</protein>
<accession>Q04179</accession>
<accession>D6VT33</accession>
<gene>
    <name type="primary">URH1</name>
    <name type="ordered locus">YDR400W</name>
    <name type="ORF">D9509.19</name>
</gene>
<evidence type="ECO:0000250" key="1"/>
<evidence type="ECO:0000269" key="2">
    <source>
    </source>
</evidence>
<evidence type="ECO:0000269" key="3">
    <source>
    </source>
</evidence>
<evidence type="ECO:0000269" key="4">
    <source>
    </source>
</evidence>
<evidence type="ECO:0000305" key="5"/>
<evidence type="ECO:0007829" key="6">
    <source>
        <dbReference type="PDB" id="8RIH"/>
    </source>
</evidence>